<proteinExistence type="inferred from homology"/>
<organism>
    <name type="scientific">Cenarchaeum symbiosum (strain A)</name>
    <dbReference type="NCBI Taxonomy" id="414004"/>
    <lineage>
        <taxon>Archaea</taxon>
        <taxon>Nitrososphaerota</taxon>
        <taxon>Candidatus Cenarchaeales</taxon>
        <taxon>Candidatus Cenarchaeaceae</taxon>
        <taxon>Candidatus Cenarchaeum</taxon>
    </lineage>
</organism>
<dbReference type="EC" id="3.1.26.4" evidence="1"/>
<dbReference type="EMBL" id="DP000238">
    <property type="protein sequence ID" value="ABK77192.1"/>
    <property type="molecule type" value="Genomic_DNA"/>
</dbReference>
<dbReference type="SMR" id="A0RV25"/>
<dbReference type="STRING" id="414004.CENSYa_0559"/>
<dbReference type="EnsemblBacteria" id="ABK77192">
    <property type="protein sequence ID" value="ABK77192"/>
    <property type="gene ID" value="CENSYa_0559"/>
</dbReference>
<dbReference type="KEGG" id="csy:CENSYa_0559"/>
<dbReference type="PATRIC" id="fig|414004.10.peg.507"/>
<dbReference type="HOGENOM" id="CLU_036532_0_4_2"/>
<dbReference type="Proteomes" id="UP000000758">
    <property type="component" value="Chromosome"/>
</dbReference>
<dbReference type="GO" id="GO:0005737">
    <property type="term" value="C:cytoplasm"/>
    <property type="evidence" value="ECO:0007669"/>
    <property type="project" value="UniProtKB-SubCell"/>
</dbReference>
<dbReference type="GO" id="GO:0032299">
    <property type="term" value="C:ribonuclease H2 complex"/>
    <property type="evidence" value="ECO:0007669"/>
    <property type="project" value="TreeGrafter"/>
</dbReference>
<dbReference type="GO" id="GO:0030145">
    <property type="term" value="F:manganese ion binding"/>
    <property type="evidence" value="ECO:0007669"/>
    <property type="project" value="UniProtKB-UniRule"/>
</dbReference>
<dbReference type="GO" id="GO:0003723">
    <property type="term" value="F:RNA binding"/>
    <property type="evidence" value="ECO:0007669"/>
    <property type="project" value="InterPro"/>
</dbReference>
<dbReference type="GO" id="GO:0004523">
    <property type="term" value="F:RNA-DNA hybrid ribonuclease activity"/>
    <property type="evidence" value="ECO:0007669"/>
    <property type="project" value="UniProtKB-UniRule"/>
</dbReference>
<dbReference type="GO" id="GO:0043137">
    <property type="term" value="P:DNA replication, removal of RNA primer"/>
    <property type="evidence" value="ECO:0007669"/>
    <property type="project" value="TreeGrafter"/>
</dbReference>
<dbReference type="GO" id="GO:0006298">
    <property type="term" value="P:mismatch repair"/>
    <property type="evidence" value="ECO:0007669"/>
    <property type="project" value="TreeGrafter"/>
</dbReference>
<dbReference type="CDD" id="cd07180">
    <property type="entry name" value="RNase_HII_archaea_like"/>
    <property type="match status" value="1"/>
</dbReference>
<dbReference type="Gene3D" id="3.30.420.10">
    <property type="entry name" value="Ribonuclease H-like superfamily/Ribonuclease H"/>
    <property type="match status" value="1"/>
</dbReference>
<dbReference type="Gene3D" id="1.10.10.460">
    <property type="entry name" value="Ribonuclease hii. Domain 2"/>
    <property type="match status" value="1"/>
</dbReference>
<dbReference type="HAMAP" id="MF_00052_A">
    <property type="entry name" value="RNase_HII_A"/>
    <property type="match status" value="1"/>
</dbReference>
<dbReference type="InterPro" id="IPR004649">
    <property type="entry name" value="RNase_H2_suA"/>
</dbReference>
<dbReference type="InterPro" id="IPR001352">
    <property type="entry name" value="RNase_HII/HIII"/>
</dbReference>
<dbReference type="InterPro" id="IPR024567">
    <property type="entry name" value="RNase_HII/HIII_dom"/>
</dbReference>
<dbReference type="InterPro" id="IPR020787">
    <property type="entry name" value="RNase_HII_arc"/>
</dbReference>
<dbReference type="InterPro" id="IPR023160">
    <property type="entry name" value="RNase_HII_hlx-loop-hlx_cap_dom"/>
</dbReference>
<dbReference type="InterPro" id="IPR012337">
    <property type="entry name" value="RNaseH-like_sf"/>
</dbReference>
<dbReference type="InterPro" id="IPR036397">
    <property type="entry name" value="RNaseH_sf"/>
</dbReference>
<dbReference type="NCBIfam" id="TIGR00729">
    <property type="entry name" value="ribonuclease HII"/>
    <property type="match status" value="1"/>
</dbReference>
<dbReference type="PANTHER" id="PTHR10954:SF23">
    <property type="entry name" value="RIBONUCLEASE"/>
    <property type="match status" value="1"/>
</dbReference>
<dbReference type="PANTHER" id="PTHR10954">
    <property type="entry name" value="RIBONUCLEASE H2 SUBUNIT A"/>
    <property type="match status" value="1"/>
</dbReference>
<dbReference type="Pfam" id="PF01351">
    <property type="entry name" value="RNase_HII"/>
    <property type="match status" value="1"/>
</dbReference>
<dbReference type="SUPFAM" id="SSF53098">
    <property type="entry name" value="Ribonuclease H-like"/>
    <property type="match status" value="1"/>
</dbReference>
<dbReference type="PROSITE" id="PS51975">
    <property type="entry name" value="RNASE_H_2"/>
    <property type="match status" value="1"/>
</dbReference>
<feature type="chain" id="PRO_0000334974" description="Ribonuclease HII">
    <location>
        <begin position="1"/>
        <end position="205"/>
    </location>
</feature>
<feature type="domain" description="RNase H type-2" evidence="2">
    <location>
        <begin position="1"/>
        <end position="205"/>
    </location>
</feature>
<feature type="binding site" evidence="1">
    <location>
        <position position="7"/>
    </location>
    <ligand>
        <name>a divalent metal cation</name>
        <dbReference type="ChEBI" id="CHEBI:60240"/>
    </ligand>
</feature>
<feature type="binding site" evidence="1">
    <location>
        <position position="8"/>
    </location>
    <ligand>
        <name>a divalent metal cation</name>
        <dbReference type="ChEBI" id="CHEBI:60240"/>
    </ligand>
</feature>
<feature type="binding site" evidence="1">
    <location>
        <position position="105"/>
    </location>
    <ligand>
        <name>a divalent metal cation</name>
        <dbReference type="ChEBI" id="CHEBI:60240"/>
    </ligand>
</feature>
<name>RNH2_CENSY</name>
<reference key="1">
    <citation type="journal article" date="2006" name="Proc. Natl. Acad. Sci. U.S.A.">
        <title>Genomic analysis of the uncultivated marine crenarchaeote Cenarchaeum symbiosum.</title>
        <authorList>
            <person name="Hallam S.J."/>
            <person name="Konstantinidis K.T."/>
            <person name="Putnam N."/>
            <person name="Schleper C."/>
            <person name="Watanabe Y."/>
            <person name="Sugahara J."/>
            <person name="Preston C."/>
            <person name="de la Torre J."/>
            <person name="Richardson P.M."/>
            <person name="DeLong E.F."/>
        </authorList>
    </citation>
    <scope>NUCLEOTIDE SEQUENCE [LARGE SCALE GENOMIC DNA]</scope>
    <source>
        <strain>A</strain>
    </source>
</reference>
<sequence>MLVCGVDEAGRGSLVGPLVIAGVAIKRNRMRELKSMGVRDSKKLTRKARESLYPEIVNMADSYHISRVPPGVVDRSVGRHMLNDLEARYMARVITRLGHGTTYVDSCDVNPRRFGGRVSEMSGRTVRSYHRADDRFVIVSAASILAKVARDRSIERLRKSHDVGSGYPSDRRTVGFVRGYYNKNGAMPPFVRRSWRPARLIEAGG</sequence>
<accession>A0RV25</accession>
<comment type="function">
    <text evidence="1">Endonuclease that specifically degrades the RNA of RNA-DNA hybrids.</text>
</comment>
<comment type="catalytic activity">
    <reaction evidence="1">
        <text>Endonucleolytic cleavage to 5'-phosphomonoester.</text>
        <dbReference type="EC" id="3.1.26.4"/>
    </reaction>
</comment>
<comment type="cofactor">
    <cofactor evidence="1">
        <name>Mn(2+)</name>
        <dbReference type="ChEBI" id="CHEBI:29035"/>
    </cofactor>
    <cofactor evidence="1">
        <name>Mg(2+)</name>
        <dbReference type="ChEBI" id="CHEBI:18420"/>
    </cofactor>
    <text evidence="1">Manganese or magnesium. Binds 1 divalent metal ion per monomer in the absence of substrate. May bind a second metal ion after substrate binding.</text>
</comment>
<comment type="subcellular location">
    <subcellularLocation>
        <location evidence="1">Cytoplasm</location>
    </subcellularLocation>
</comment>
<comment type="similarity">
    <text evidence="1">Belongs to the RNase HII family.</text>
</comment>
<keyword id="KW-0963">Cytoplasm</keyword>
<keyword id="KW-0255">Endonuclease</keyword>
<keyword id="KW-0378">Hydrolase</keyword>
<keyword id="KW-0464">Manganese</keyword>
<keyword id="KW-0479">Metal-binding</keyword>
<keyword id="KW-0540">Nuclease</keyword>
<keyword id="KW-1185">Reference proteome</keyword>
<evidence type="ECO:0000255" key="1">
    <source>
        <dbReference type="HAMAP-Rule" id="MF_00052"/>
    </source>
</evidence>
<evidence type="ECO:0000255" key="2">
    <source>
        <dbReference type="PROSITE-ProRule" id="PRU01319"/>
    </source>
</evidence>
<gene>
    <name evidence="1" type="primary">rnhB</name>
    <name type="ordered locus">CENSYa_0559</name>
</gene>
<protein>
    <recommendedName>
        <fullName evidence="1">Ribonuclease HII</fullName>
        <shortName evidence="1">RNase HII</shortName>
        <ecNumber evidence="1">3.1.26.4</ecNumber>
    </recommendedName>
</protein>